<reference key="1">
    <citation type="journal article" date="2004" name="Science">
        <title>The genome of the diatom Thalassiosira pseudonana: ecology, evolution, and metabolism.</title>
        <authorList>
            <person name="Armbrust E.V."/>
            <person name="Berges J.A."/>
            <person name="Bowler C."/>
            <person name="Green B.R."/>
            <person name="Martinez D."/>
            <person name="Putnam N.H."/>
            <person name="Zhou S."/>
            <person name="Allen A.E."/>
            <person name="Apt K.E."/>
            <person name="Bechner M."/>
            <person name="Brzezinski M.A."/>
            <person name="Chaal B.K."/>
            <person name="Chiovitti A."/>
            <person name="Davis A.K."/>
            <person name="Demarest M.S."/>
            <person name="Detter J.C."/>
            <person name="Glavina T."/>
            <person name="Goodstein D."/>
            <person name="Hadi M.Z."/>
            <person name="Hellsten U."/>
            <person name="Hildebrand M."/>
            <person name="Jenkins B.D."/>
            <person name="Jurka J."/>
            <person name="Kapitonov V.V."/>
            <person name="Kroger N."/>
            <person name="Lau W.W."/>
            <person name="Lane T.W."/>
            <person name="Larimer F.W."/>
            <person name="Lippmeier J.C."/>
            <person name="Lucas S."/>
            <person name="Medina M."/>
            <person name="Montsant A."/>
            <person name="Obornik M."/>
            <person name="Parker M.S."/>
            <person name="Palenik B."/>
            <person name="Pazour G.J."/>
            <person name="Richardson P.M."/>
            <person name="Rynearson T.A."/>
            <person name="Saito M.A."/>
            <person name="Schwartz D.C."/>
            <person name="Thamatrakoln K."/>
            <person name="Valentin K."/>
            <person name="Vardi A."/>
            <person name="Wilkerson F.P."/>
            <person name="Rokhsar D.S."/>
        </authorList>
    </citation>
    <scope>NUCLEOTIDE SEQUENCE [LARGE SCALE GENOMIC DNA]</scope>
    <source>
        <strain>CCMP1335 / NEPCC58 / CCAP 1085/12</strain>
    </source>
</reference>
<reference key="2">
    <citation type="submission" date="2008-09" db="EMBL/GenBank/DDBJ databases">
        <authorList>
            <consortium name="Diatom Consortium"/>
            <person name="Grigoriev I."/>
            <person name="Grimwood J."/>
            <person name="Kuo A."/>
            <person name="Otillar R.P."/>
            <person name="Salamov A."/>
            <person name="Detter J.C."/>
            <person name="Schmutz J."/>
            <person name="Lindquist E."/>
            <person name="Shapiro H."/>
            <person name="Lucas S."/>
            <person name="Glavina del Rio T."/>
            <person name="Bruce D."/>
            <person name="Pitluck S."/>
            <person name="Rokhsar D."/>
            <person name="Armbrust V."/>
        </authorList>
    </citation>
    <scope>GENOME REANNOTATION</scope>
    <source>
        <strain>CCMP1335 / NEPCC58 / CCAP 1085/12</strain>
    </source>
</reference>
<evidence type="ECO:0000255" key="1">
    <source>
        <dbReference type="HAMAP-Rule" id="MF_03124"/>
    </source>
</evidence>
<organism>
    <name type="scientific">Thalassiosira pseudonana</name>
    <name type="common">Marine diatom</name>
    <name type="synonym">Cyclotella nana</name>
    <dbReference type="NCBI Taxonomy" id="35128"/>
    <lineage>
        <taxon>Eukaryota</taxon>
        <taxon>Sar</taxon>
        <taxon>Stramenopiles</taxon>
        <taxon>Ochrophyta</taxon>
        <taxon>Bacillariophyta</taxon>
        <taxon>Coscinodiscophyceae</taxon>
        <taxon>Thalassiosirophycidae</taxon>
        <taxon>Thalassiosirales</taxon>
        <taxon>Thalassiosiraceae</taxon>
        <taxon>Thalassiosira</taxon>
    </lineage>
</organism>
<name>ARGJ_THAPS</name>
<sequence>MMFTKSTALALAAIVALSNVNAFSTSIHQPITSKAAHITSSSSLQAANNGLDTDTTLPSFSTKEEYTSYLQKAGRLPSGFAVGTAKGTFVSVEAPALGPLPIKATVIHLTEGPTDSWAAVFTKQSGCPVKVGKARLSGGHPLQALVINNKVSNVCPGGDGIAAAESVCAAVASSLNLPGGANSVLPSSTGVIGWRLPAKELAEDVAPRAIEALQTESAYAAAEAIMTTDRYPKLRSKTLSDGVRVVGVAKGAGMIEPNMATMLGYIMTDATIEKSKLQTMLTEACNRSFNSISVDGDESTSDTVVAIASGLKPLSSEDELKDALFEVCEGLSADLVRNGEGTGHVIRVTISNFPGSEYDARRMGRHLVNSPLVKCAISGNDPNTGRIAGAIGSFMGKFFPTESVAEMSLTLGGRTIFNNGQFVLEGDAVEKELSGHMSDAQLGEHDDFPKHQKFVEIGVDFGGSGSDVIVLGSDLTKEYVEVNADYRS</sequence>
<comment type="function">
    <text evidence="1">Catalyzes two activities which are involved in the cyclic version of arginine biosynthesis: the synthesis of acetylglutamate from glutamate and acetyl-CoA, and of ornithine by transacetylation between acetylornithine and glutamate.</text>
</comment>
<comment type="catalytic activity">
    <reaction evidence="1">
        <text>N(2)-acetyl-L-ornithine + L-glutamate = N-acetyl-L-glutamate + L-ornithine</text>
        <dbReference type="Rhea" id="RHEA:15349"/>
        <dbReference type="ChEBI" id="CHEBI:29985"/>
        <dbReference type="ChEBI" id="CHEBI:44337"/>
        <dbReference type="ChEBI" id="CHEBI:46911"/>
        <dbReference type="ChEBI" id="CHEBI:57805"/>
        <dbReference type="EC" id="2.3.1.35"/>
    </reaction>
</comment>
<comment type="catalytic activity">
    <reaction evidence="1">
        <text>L-glutamate + acetyl-CoA = N-acetyl-L-glutamate + CoA + H(+)</text>
        <dbReference type="Rhea" id="RHEA:24292"/>
        <dbReference type="ChEBI" id="CHEBI:15378"/>
        <dbReference type="ChEBI" id="CHEBI:29985"/>
        <dbReference type="ChEBI" id="CHEBI:44337"/>
        <dbReference type="ChEBI" id="CHEBI:57287"/>
        <dbReference type="ChEBI" id="CHEBI:57288"/>
        <dbReference type="EC" id="2.3.1.1"/>
    </reaction>
</comment>
<comment type="pathway">
    <text evidence="1">Amino-acid biosynthesis; L-arginine biosynthesis; L-ornithine and N-acetyl-L-glutamate from L-glutamate and N(2)-acetyl-L-ornithine (cyclic): step 1/1.</text>
</comment>
<comment type="pathway">
    <text evidence="1">Amino-acid biosynthesis; L-arginine biosynthesis; N(2)-acetyl-L-ornithine from L-glutamate: step 1/4.</text>
</comment>
<comment type="subunit">
    <text evidence="1">Heterodimer of an alpha and a beta chain.</text>
</comment>
<comment type="subcellular location">
    <subcellularLocation>
        <location evidence="1">Mitochondrion matrix</location>
    </subcellularLocation>
</comment>
<comment type="PTM">
    <text evidence="1">The alpha and beta chains are autoproteolytically processed from a single precursor protein within the mitochondrion.</text>
</comment>
<comment type="miscellaneous">
    <text evidence="1">This protein may be expected to contain an N-terminal transit peptide but none has been predicted.</text>
</comment>
<comment type="similarity">
    <text evidence="1">Belongs to the ArgJ family.</text>
</comment>
<dbReference type="EC" id="2.3.1.35" evidence="1"/>
<dbReference type="EC" id="2.3.1.1" evidence="1"/>
<dbReference type="EMBL" id="CM000639">
    <property type="protein sequence ID" value="EED95434.1"/>
    <property type="molecule type" value="Genomic_DNA"/>
</dbReference>
<dbReference type="RefSeq" id="XP_002287991.1">
    <property type="nucleotide sequence ID" value="XM_002287955.1"/>
</dbReference>
<dbReference type="SMR" id="B8BVB6"/>
<dbReference type="STRING" id="35128.B8BVB6"/>
<dbReference type="PaxDb" id="35128-Thaps2779"/>
<dbReference type="EnsemblProtists" id="EED95434">
    <property type="protein sequence ID" value="EED95434"/>
    <property type="gene ID" value="THAPSDRAFT_2779"/>
</dbReference>
<dbReference type="GeneID" id="7452307"/>
<dbReference type="KEGG" id="tps:THAPSDRAFT_2779"/>
<dbReference type="eggNOG" id="KOG2786">
    <property type="taxonomic scope" value="Eukaryota"/>
</dbReference>
<dbReference type="InParanoid" id="B8BVB6"/>
<dbReference type="OMA" id="WGRIVMA"/>
<dbReference type="UniPathway" id="UPA00068">
    <property type="reaction ID" value="UER00106"/>
</dbReference>
<dbReference type="UniPathway" id="UPA00068">
    <property type="reaction ID" value="UER00111"/>
</dbReference>
<dbReference type="Proteomes" id="UP000001449">
    <property type="component" value="Chromosome 2"/>
</dbReference>
<dbReference type="GO" id="GO:0005759">
    <property type="term" value="C:mitochondrial matrix"/>
    <property type="evidence" value="ECO:0007669"/>
    <property type="project" value="UniProtKB-SubCell"/>
</dbReference>
<dbReference type="GO" id="GO:0004358">
    <property type="term" value="F:glutamate N-acetyltransferase activity"/>
    <property type="evidence" value="ECO:0007669"/>
    <property type="project" value="UniProtKB-UniRule"/>
</dbReference>
<dbReference type="GO" id="GO:0004042">
    <property type="term" value="F:L-glutamate N-acetyltransferase activity"/>
    <property type="evidence" value="ECO:0000318"/>
    <property type="project" value="GO_Central"/>
</dbReference>
<dbReference type="GO" id="GO:0006526">
    <property type="term" value="P:L-arginine biosynthetic process"/>
    <property type="evidence" value="ECO:0007669"/>
    <property type="project" value="UniProtKB-UniRule"/>
</dbReference>
<dbReference type="GO" id="GO:0006592">
    <property type="term" value="P:ornithine biosynthetic process"/>
    <property type="evidence" value="ECO:0000318"/>
    <property type="project" value="GO_Central"/>
</dbReference>
<dbReference type="FunFam" id="3.60.70.12:FF:000001">
    <property type="entry name" value="Arginine biosynthesis bifunctional protein ArgJ, chloroplastic"/>
    <property type="match status" value="1"/>
</dbReference>
<dbReference type="Gene3D" id="3.10.20.340">
    <property type="entry name" value="ArgJ beta chain, C-terminal domain"/>
    <property type="match status" value="1"/>
</dbReference>
<dbReference type="Gene3D" id="3.60.70.12">
    <property type="entry name" value="L-amino peptidase D-ALA esterase/amidase"/>
    <property type="match status" value="1"/>
</dbReference>
<dbReference type="HAMAP" id="MF_01106">
    <property type="entry name" value="ArgJ"/>
    <property type="match status" value="1"/>
</dbReference>
<dbReference type="InterPro" id="IPR002813">
    <property type="entry name" value="Arg_biosynth_ArgJ"/>
</dbReference>
<dbReference type="InterPro" id="IPR016117">
    <property type="entry name" value="ArgJ-like_dom_sf"/>
</dbReference>
<dbReference type="InterPro" id="IPR042195">
    <property type="entry name" value="ArgJ_beta_C"/>
</dbReference>
<dbReference type="PANTHER" id="PTHR23100">
    <property type="entry name" value="ARGININE BIOSYNTHESIS BIFUNCTIONAL PROTEIN ARGJ"/>
    <property type="match status" value="1"/>
</dbReference>
<dbReference type="PANTHER" id="PTHR23100:SF0">
    <property type="entry name" value="ARGININE BIOSYNTHESIS BIFUNCTIONAL PROTEIN ARGJ, MITOCHONDRIAL"/>
    <property type="match status" value="1"/>
</dbReference>
<dbReference type="Pfam" id="PF01960">
    <property type="entry name" value="ArgJ"/>
    <property type="match status" value="1"/>
</dbReference>
<dbReference type="SUPFAM" id="SSF56266">
    <property type="entry name" value="DmpA/ArgJ-like"/>
    <property type="match status" value="1"/>
</dbReference>
<feature type="chain" id="PRO_0000397998" description="Arginine biosynthesis bifunctional protein ArgJ alpha chain" evidence="1">
    <location>
        <begin position="1"/>
        <end position="260"/>
    </location>
</feature>
<feature type="chain" id="PRO_0000397999" description="Arginine biosynthesis bifunctional protein ArgJ beta chain" evidence="1">
    <location>
        <begin position="261"/>
        <end position="488"/>
    </location>
</feature>
<feature type="active site" description="Nucleophile" evidence="1">
    <location>
        <position position="261"/>
    </location>
</feature>
<feature type="binding site" evidence="1">
    <location>
        <position position="227"/>
    </location>
    <ligand>
        <name>substrate</name>
    </ligand>
</feature>
<feature type="binding site" evidence="1">
    <location>
        <position position="250"/>
    </location>
    <ligand>
        <name>substrate</name>
    </ligand>
</feature>
<feature type="binding site" evidence="1">
    <location>
        <position position="261"/>
    </location>
    <ligand>
        <name>substrate</name>
    </ligand>
</feature>
<feature type="binding site" evidence="1">
    <location>
        <position position="340"/>
    </location>
    <ligand>
        <name>substrate</name>
    </ligand>
</feature>
<feature type="binding site" evidence="1">
    <location>
        <position position="483"/>
    </location>
    <ligand>
        <name>substrate</name>
    </ligand>
</feature>
<feature type="binding site" evidence="1">
    <location>
        <position position="488"/>
    </location>
    <ligand>
        <name>substrate</name>
    </ligand>
</feature>
<feature type="site" description="Involved in the stabilization of negative charge on the oxyanion by the formation of the oxyanion hole" evidence="1">
    <location>
        <position position="189"/>
    </location>
</feature>
<feature type="site" description="Involved in the stabilization of negative charge on the oxyanion by the formation of the oxyanion hole" evidence="1">
    <location>
        <position position="190"/>
    </location>
</feature>
<feature type="site" description="Cleavage; by autolysis" evidence="1">
    <location>
        <begin position="260"/>
        <end position="261"/>
    </location>
</feature>
<gene>
    <name type="ORF">THAPSDRAFT_2779</name>
</gene>
<protein>
    <recommendedName>
        <fullName evidence="1">Arginine biosynthesis bifunctional protein ArgJ, mitochondrial</fullName>
    </recommendedName>
    <domain>
        <recommendedName>
            <fullName evidence="1">Glutamate N-acetyltransferase</fullName>
            <shortName evidence="1">GAT</shortName>
            <ecNumber evidence="1">2.3.1.35</ecNumber>
        </recommendedName>
        <alternativeName>
            <fullName evidence="1">Ornithine acetyltransferase</fullName>
            <shortName evidence="1">OATase</shortName>
        </alternativeName>
        <alternativeName>
            <fullName evidence="1">Ornithine transacetylase</fullName>
        </alternativeName>
    </domain>
    <domain>
        <recommendedName>
            <fullName evidence="1">Amino-acid acetyltransferase</fullName>
            <ecNumber evidence="1">2.3.1.1</ecNumber>
        </recommendedName>
        <alternativeName>
            <fullName evidence="1">N-acetylglutamate synthase</fullName>
            <shortName evidence="1">AGS</shortName>
        </alternativeName>
    </domain>
    <component>
        <recommendedName>
            <fullName evidence="1">Arginine biosynthesis bifunctional protein ArgJ alpha chain</fullName>
        </recommendedName>
    </component>
    <component>
        <recommendedName>
            <fullName evidence="1">Arginine biosynthesis bifunctional protein ArgJ beta chain</fullName>
        </recommendedName>
    </component>
</protein>
<accession>B8BVB6</accession>
<proteinExistence type="inferred from homology"/>
<keyword id="KW-0012">Acyltransferase</keyword>
<keyword id="KW-0028">Amino-acid biosynthesis</keyword>
<keyword id="KW-0055">Arginine biosynthesis</keyword>
<keyword id="KW-0068">Autocatalytic cleavage</keyword>
<keyword id="KW-0496">Mitochondrion</keyword>
<keyword id="KW-0511">Multifunctional enzyme</keyword>
<keyword id="KW-1185">Reference proteome</keyword>
<keyword id="KW-0808">Transferase</keyword>